<proteinExistence type="evidence at protein level"/>
<protein>
    <recommendedName>
        <fullName evidence="4">Delta-hexatoxin-Hv1b</fullName>
        <shortName evidence="4">Delta-HXTX-Hv1b</shortName>
    </recommendedName>
    <alternativeName>
        <fullName evidence="3">Delta-atracotoxin-Hv1b</fullName>
        <shortName evidence="3">Delta-ACTX-Hv1b</shortName>
    </alternativeName>
</protein>
<comment type="function">
    <text evidence="2">Lethal neurotoxin. Slows the inactivation of tetrodotoxin-sensitive voltage-gated sodium channels (Nav) by binding to site 3 of the channel, resulting in repetitive firing in autonomic and motor nerve fibers.</text>
</comment>
<comment type="subcellular location">
    <subcellularLocation>
        <location evidence="2">Secreted</location>
    </subcellularLocation>
</comment>
<comment type="tissue specificity">
    <text evidence="5">Expressed by the venom gland.</text>
</comment>
<comment type="domain">
    <text evidence="1">The presence of a 'disulfide through disulfide knot' structurally defines this protein as a knottin.</text>
</comment>
<comment type="similarity">
    <text evidence="4">Belongs to the neurotoxin 06 (delta-actx) family.</text>
</comment>
<organism>
    <name type="scientific">Hadronyche versuta</name>
    <name type="common">Blue mountains funnel-web spider</name>
    <name type="synonym">Atrax versutus</name>
    <dbReference type="NCBI Taxonomy" id="6904"/>
    <lineage>
        <taxon>Eukaryota</taxon>
        <taxon>Metazoa</taxon>
        <taxon>Ecdysozoa</taxon>
        <taxon>Arthropoda</taxon>
        <taxon>Chelicerata</taxon>
        <taxon>Arachnida</taxon>
        <taxon>Araneae</taxon>
        <taxon>Mygalomorphae</taxon>
        <taxon>Hexathelidae</taxon>
        <taxon>Hadronyche</taxon>
    </lineage>
</organism>
<dbReference type="SMR" id="P81885"/>
<dbReference type="ArachnoServer" id="AS000170">
    <property type="toxin name" value="delta-hexatoxin-Hv1b"/>
</dbReference>
<dbReference type="GO" id="GO:0005576">
    <property type="term" value="C:extracellular region"/>
    <property type="evidence" value="ECO:0007669"/>
    <property type="project" value="UniProtKB-SubCell"/>
</dbReference>
<dbReference type="GO" id="GO:0019871">
    <property type="term" value="F:sodium channel inhibitor activity"/>
    <property type="evidence" value="ECO:0007669"/>
    <property type="project" value="InterPro"/>
</dbReference>
<dbReference type="GO" id="GO:0090729">
    <property type="term" value="F:toxin activity"/>
    <property type="evidence" value="ECO:0007669"/>
    <property type="project" value="UniProtKB-KW"/>
</dbReference>
<dbReference type="Gene3D" id="4.10.40.10">
    <property type="match status" value="1"/>
</dbReference>
<dbReference type="InterPro" id="IPR008017">
    <property type="entry name" value="Delta-hexatoxin"/>
</dbReference>
<dbReference type="Pfam" id="PF05353">
    <property type="entry name" value="Atracotoxin"/>
    <property type="match status" value="1"/>
</dbReference>
<dbReference type="SUPFAM" id="SSF57059">
    <property type="entry name" value="omega toxin-like"/>
    <property type="match status" value="1"/>
</dbReference>
<dbReference type="PROSITE" id="PS60018">
    <property type="entry name" value="DELTA_ACTX"/>
    <property type="match status" value="1"/>
</dbReference>
<reference key="1">
    <citation type="journal article" date="2000" name="FEBS Lett.">
        <title>Isolation and pharmacological characterisation of delta-atracotoxin-Hv1b, a vertebrate-selective sodium channel toxin.</title>
        <authorList>
            <person name="Szeto T.H."/>
            <person name="Birinyi-Strachan L.C."/>
            <person name="Smith R."/>
            <person name="Connor M."/>
            <person name="Christie M.J."/>
            <person name="King G.F."/>
            <person name="Nicholson G.M."/>
        </authorList>
    </citation>
    <scope>PROTEIN SEQUENCE</scope>
    <scope>FUNCTION</scope>
    <scope>SUBCELLULAR LOCATION</scope>
    <source>
        <tissue>Venom</tissue>
    </source>
</reference>
<evidence type="ECO:0000250" key="1">
    <source>
        <dbReference type="UniProtKB" id="P13494"/>
    </source>
</evidence>
<evidence type="ECO:0000269" key="2">
    <source>
    </source>
</evidence>
<evidence type="ECO:0000303" key="3">
    <source>
    </source>
</evidence>
<evidence type="ECO:0000305" key="4"/>
<evidence type="ECO:0000305" key="5">
    <source>
    </source>
</evidence>
<keyword id="KW-0903">Direct protein sequencing</keyword>
<keyword id="KW-1015">Disulfide bond</keyword>
<keyword id="KW-0872">Ion channel impairing toxin</keyword>
<keyword id="KW-0960">Knottin</keyword>
<keyword id="KW-0528">Neurotoxin</keyword>
<keyword id="KW-0964">Secreted</keyword>
<keyword id="KW-0800">Toxin</keyword>
<keyword id="KW-0738">Voltage-gated sodium channel impairing toxin</keyword>
<sequence length="42" mass="4779">CSRSDGWCGKTEDCCCPMKCIKAWYKQNGNCQNTISAIWKNC</sequence>
<accession>P81885</accession>
<name>D1B_HADVE</name>
<feature type="chain" id="PRO_0000087655" description="Delta-hexatoxin-Hv1b" evidence="2">
    <location>
        <begin position="1"/>
        <end position="42"/>
    </location>
</feature>
<feature type="disulfide bond" evidence="1">
    <location>
        <begin position="1"/>
        <end position="15"/>
    </location>
</feature>
<feature type="disulfide bond" evidence="1">
    <location>
        <begin position="8"/>
        <end position="20"/>
    </location>
</feature>
<feature type="disulfide bond" evidence="1">
    <location>
        <begin position="14"/>
        <end position="31"/>
    </location>
</feature>
<feature type="disulfide bond" evidence="1">
    <location>
        <begin position="16"/>
        <end position="42"/>
    </location>
</feature>